<comment type="function">
    <text evidence="1">Cell surface-associated protein implicated in virulence. Promotes bacterial attachment exclusively to the gamma-chain of human fibrinogen. Induces formation of bacterial clumps (By similarity).</text>
</comment>
<comment type="subcellular location">
    <subcellularLocation>
        <location evidence="4">Secreted</location>
        <location evidence="4">Cell wall</location>
        <topology evidence="4">Peptidoglycan-anchor</topology>
    </subcellularLocation>
    <text evidence="2">Anchored to the cell wall by sortase A (By similarity).</text>
</comment>
<comment type="similarity">
    <text evidence="6">Belongs to the serine-aspartate repeat-containing protein (SDr) family.</text>
</comment>
<feature type="signal peptide" evidence="3">
    <location>
        <begin position="1"/>
        <end position="39"/>
    </location>
</feature>
<feature type="chain" id="PRO_0000041992" description="Clumping factor A">
    <location>
        <begin position="40"/>
        <end position="899"/>
    </location>
</feature>
<feature type="propeptide" id="PRO_0000041993" description="Removed by sortase" evidence="4">
    <location>
        <begin position="900"/>
        <end position="933"/>
    </location>
</feature>
<feature type="region of interest" description="Disordered" evidence="5">
    <location>
        <begin position="34"/>
        <end position="200"/>
    </location>
</feature>
<feature type="region of interest" description="Ligand binding A region" evidence="1">
    <location>
        <begin position="40"/>
        <end position="542"/>
    </location>
</feature>
<feature type="region of interest" description="Disordered" evidence="5">
    <location>
        <begin position="529"/>
        <end position="904"/>
    </location>
</feature>
<feature type="short sequence motif" description="YSIRK-G/S signaling motif" evidence="2">
    <location>
        <begin position="9"/>
        <end position="20"/>
    </location>
</feature>
<feature type="short sequence motif" description="LPXTG sorting signal" evidence="4">
    <location>
        <begin position="896"/>
        <end position="900"/>
    </location>
</feature>
<feature type="compositionally biased region" description="Low complexity" evidence="5">
    <location>
        <begin position="47"/>
        <end position="65"/>
    </location>
</feature>
<feature type="compositionally biased region" description="Polar residues" evidence="5">
    <location>
        <begin position="71"/>
        <end position="105"/>
    </location>
</feature>
<feature type="compositionally biased region" description="Low complexity" evidence="5">
    <location>
        <begin position="106"/>
        <end position="132"/>
    </location>
</feature>
<feature type="compositionally biased region" description="Low complexity" evidence="5">
    <location>
        <begin position="143"/>
        <end position="162"/>
    </location>
</feature>
<feature type="compositionally biased region" description="Polar residues" evidence="5">
    <location>
        <begin position="163"/>
        <end position="200"/>
    </location>
</feature>
<feature type="compositionally biased region" description="Acidic residues" evidence="5">
    <location>
        <begin position="547"/>
        <end position="565"/>
    </location>
</feature>
<feature type="compositionally biased region" description="Low complexity" evidence="5">
    <location>
        <begin position="566"/>
        <end position="598"/>
    </location>
</feature>
<feature type="compositionally biased region" description="Acidic residues" evidence="5">
    <location>
        <begin position="599"/>
        <end position="861"/>
    </location>
</feature>
<feature type="compositionally biased region" description="Low complexity" evidence="5">
    <location>
        <begin position="862"/>
        <end position="880"/>
    </location>
</feature>
<feature type="compositionally biased region" description="Basic and acidic residues" evidence="5">
    <location>
        <begin position="887"/>
        <end position="896"/>
    </location>
</feature>
<feature type="modified residue" description="Pentaglycyl murein peptidoglycan amidated threonine" evidence="4">
    <location>
        <position position="899"/>
    </location>
</feature>
<name>CLFA_STAAC</name>
<gene>
    <name type="primary">clfA</name>
    <name type="ordered locus">SACOL0856</name>
</gene>
<organism>
    <name type="scientific">Staphylococcus aureus (strain COL)</name>
    <dbReference type="NCBI Taxonomy" id="93062"/>
    <lineage>
        <taxon>Bacteria</taxon>
        <taxon>Bacillati</taxon>
        <taxon>Bacillota</taxon>
        <taxon>Bacilli</taxon>
        <taxon>Bacillales</taxon>
        <taxon>Staphylococcaceae</taxon>
        <taxon>Staphylococcus</taxon>
    </lineage>
</organism>
<proteinExistence type="inferred from homology"/>
<reference key="1">
    <citation type="journal article" date="2005" name="J. Bacteriol.">
        <title>Insights on evolution of virulence and resistance from the complete genome analysis of an early methicillin-resistant Staphylococcus aureus strain and a biofilm-producing methicillin-resistant Staphylococcus epidermidis strain.</title>
        <authorList>
            <person name="Gill S.R."/>
            <person name="Fouts D.E."/>
            <person name="Archer G.L."/>
            <person name="Mongodin E.F."/>
            <person name="DeBoy R.T."/>
            <person name="Ravel J."/>
            <person name="Paulsen I.T."/>
            <person name="Kolonay J.F."/>
            <person name="Brinkac L.M."/>
            <person name="Beanan M.J."/>
            <person name="Dodson R.J."/>
            <person name="Daugherty S.C."/>
            <person name="Madupu R."/>
            <person name="Angiuoli S.V."/>
            <person name="Durkin A.S."/>
            <person name="Haft D.H."/>
            <person name="Vamathevan J.J."/>
            <person name="Khouri H."/>
            <person name="Utterback T.R."/>
            <person name="Lee C."/>
            <person name="Dimitrov G."/>
            <person name="Jiang L."/>
            <person name="Qin H."/>
            <person name="Weidman J."/>
            <person name="Tran K."/>
            <person name="Kang K.H."/>
            <person name="Hance I.R."/>
            <person name="Nelson K.E."/>
            <person name="Fraser C.M."/>
        </authorList>
    </citation>
    <scope>NUCLEOTIDE SEQUENCE [LARGE SCALE GENOMIC DNA]</scope>
    <source>
        <strain>COL</strain>
    </source>
</reference>
<sequence>MNMKKKEKHAIRKKSIGVASVLVGTLIGFGLLSSKEADASENSVTQSDSASNESKSNDSSSVSAAPKTDDTNVSDTKTSSNTNNGETSVAQNPAQQETTQSSSTNATTEETPVTGEATTTTTNQANTPATTQSSNTNAEELVNQTSNETTSNDTNTVSSVNSPQNSTNAENVSTTQDTSTEATPSNNESAPQSTDASNKDVVNQAVNTSAPRMRAFSLAAVAADAPAAGTDITNQLTNVTVGIDSGTTVYPHQAGYVKLNYGFSVPNSAVKGDTFKITVPKELNLNGVTSTAKVPPIMAGDQVLANGVIDSDGNVIYTFTDYVNTKDDVKATLTMPAYIDPENVKKTGNVTLATGIGSTTANKTVLVDYEKYGKFYNLSIKGTIDQIDKTNNTYRQTIYVNPSGDNVIAPVLTGNLKPNTDSNALIDQQNTSIKVYKVDNAADLSESYFVNPENFEDVTNSVNITFPNPNQYKVEFNTPDDQITTPYIVVVNGHIDPNSKGDLALRSTLYGYNSNIIWRSMSWDNEVAFNNGSGSGDGIDKPVVPEQPDEPGEIEPIPEDSDSDPGSDSGSDSNSDSGSDSGSDSTSDSGSDSASDSDSASDSDSASDSDSASDSDSASDSDSDNDSDSDSDSDSDSDSDSDSDSDSDSDSDSDSDSDSDSDSDSDSDSDSDSDSDSDSDSDSDSDSDSDSDSDSDSDSDSDSDSDSDSDSDSDSDSDSDSDSDSDSDSDSDSDSDSDSDSDSDSDSDSDSDSDSDSDSDSDSDSDSASDSDSDSDSDSDSDSDSDSDSDSDSDSDSDSDSDSDSDSESDSDSESDSDSDSDSDSDSDSDSDSDSDSASDSDSGSDSDSSSDSDSESDSNSDSESGSNNNVVPPNSPKNGTNASNKNEAKDSKEPLPDTGSEDEANTSLIWGLLASIGSLLLFRRKKENKDKK</sequence>
<protein>
    <recommendedName>
        <fullName>Clumping factor A</fullName>
    </recommendedName>
    <alternativeName>
        <fullName>Fibrinogen receptor A</fullName>
    </alternativeName>
    <alternativeName>
        <fullName>Fibrinogen-binding protein A</fullName>
    </alternativeName>
</protein>
<evidence type="ECO:0000250" key="1"/>
<evidence type="ECO:0000250" key="2">
    <source>
        <dbReference type="UniProtKB" id="Q2G015"/>
    </source>
</evidence>
<evidence type="ECO:0000255" key="3"/>
<evidence type="ECO:0000255" key="4">
    <source>
        <dbReference type="PROSITE-ProRule" id="PRU00477"/>
    </source>
</evidence>
<evidence type="ECO:0000256" key="5">
    <source>
        <dbReference type="SAM" id="MobiDB-lite"/>
    </source>
</evidence>
<evidence type="ECO:0000305" key="6"/>
<dbReference type="EMBL" id="CP000046">
    <property type="protein sequence ID" value="AAW36411.1"/>
    <property type="molecule type" value="Genomic_DNA"/>
</dbReference>
<dbReference type="RefSeq" id="WP_001056223.1">
    <property type="nucleotide sequence ID" value="NZ_JBGOFO010000005.1"/>
</dbReference>
<dbReference type="SMR" id="Q5HHM8"/>
<dbReference type="KEGG" id="sac:SACOL0856"/>
<dbReference type="HOGENOM" id="CLU_010159_0_0_9"/>
<dbReference type="PRO" id="PR:Q5HHM8"/>
<dbReference type="Proteomes" id="UP000000530">
    <property type="component" value="Chromosome"/>
</dbReference>
<dbReference type="GO" id="GO:0005576">
    <property type="term" value="C:extracellular region"/>
    <property type="evidence" value="ECO:0007669"/>
    <property type="project" value="UniProtKB-KW"/>
</dbReference>
<dbReference type="GO" id="GO:0007155">
    <property type="term" value="P:cell adhesion"/>
    <property type="evidence" value="ECO:0007669"/>
    <property type="project" value="InterPro"/>
</dbReference>
<dbReference type="FunFam" id="2.60.40.1280:FF:000002">
    <property type="entry name" value="Clumping factor A"/>
    <property type="match status" value="1"/>
</dbReference>
<dbReference type="FunFam" id="2.60.40.1290:FF:000001">
    <property type="entry name" value="Clumping factor A"/>
    <property type="match status" value="1"/>
</dbReference>
<dbReference type="Gene3D" id="2.60.40.1280">
    <property type="match status" value="1"/>
</dbReference>
<dbReference type="Gene3D" id="2.60.40.1290">
    <property type="match status" value="1"/>
</dbReference>
<dbReference type="InterPro" id="IPR011266">
    <property type="entry name" value="Adhesin_Fg-bd_dom_2"/>
</dbReference>
<dbReference type="InterPro" id="IPR008966">
    <property type="entry name" value="Adhesion_dom_sf"/>
</dbReference>
<dbReference type="InterPro" id="IPR011252">
    <property type="entry name" value="Fibrogen-bd_dom1"/>
</dbReference>
<dbReference type="InterPro" id="IPR019931">
    <property type="entry name" value="LPXTG_anchor"/>
</dbReference>
<dbReference type="InterPro" id="IPR050972">
    <property type="entry name" value="SDr-like"/>
</dbReference>
<dbReference type="InterPro" id="IPR041171">
    <property type="entry name" value="SDR_Ig"/>
</dbReference>
<dbReference type="InterPro" id="IPR005877">
    <property type="entry name" value="YSIRK_signal_dom"/>
</dbReference>
<dbReference type="NCBIfam" id="TIGR01167">
    <property type="entry name" value="LPXTG_anchor"/>
    <property type="match status" value="1"/>
</dbReference>
<dbReference type="NCBIfam" id="NF033609">
    <property type="entry name" value="MSCRAMM_ClfA"/>
    <property type="match status" value="1"/>
</dbReference>
<dbReference type="NCBIfam" id="TIGR01168">
    <property type="entry name" value="YSIRK_signal"/>
    <property type="match status" value="1"/>
</dbReference>
<dbReference type="PANTHER" id="PTHR34403">
    <property type="entry name" value="TOL-PAL SYSTEM PROTEIN TOLA"/>
    <property type="match status" value="1"/>
</dbReference>
<dbReference type="PANTHER" id="PTHR34403:SF8">
    <property type="entry name" value="TOL-PAL SYSTEM PROTEIN TOLA"/>
    <property type="match status" value="1"/>
</dbReference>
<dbReference type="Pfam" id="PF17961">
    <property type="entry name" value="Big_8"/>
    <property type="match status" value="1"/>
</dbReference>
<dbReference type="Pfam" id="PF00746">
    <property type="entry name" value="Gram_pos_anchor"/>
    <property type="match status" value="1"/>
</dbReference>
<dbReference type="Pfam" id="PF10425">
    <property type="entry name" value="SdrG_C_C"/>
    <property type="match status" value="1"/>
</dbReference>
<dbReference type="Pfam" id="PF04650">
    <property type="entry name" value="YSIRK_signal"/>
    <property type="match status" value="1"/>
</dbReference>
<dbReference type="SUPFAM" id="SSF49401">
    <property type="entry name" value="Bacterial adhesins"/>
    <property type="match status" value="2"/>
</dbReference>
<dbReference type="PROSITE" id="PS50847">
    <property type="entry name" value="GRAM_POS_ANCHORING"/>
    <property type="match status" value="1"/>
</dbReference>
<keyword id="KW-0134">Cell wall</keyword>
<keyword id="KW-0572">Peptidoglycan-anchor</keyword>
<keyword id="KW-0964">Secreted</keyword>
<keyword id="KW-0732">Signal</keyword>
<keyword id="KW-0843">Virulence</keyword>
<accession>Q5HHM8</accession>